<protein>
    <recommendedName>
        <fullName evidence="2">D-erythrose-4-phosphate dehydrogenase</fullName>
        <shortName evidence="2">E4PDH</shortName>
        <ecNumber evidence="2">1.2.1.72</ecNumber>
    </recommendedName>
</protein>
<keyword id="KW-0963">Cytoplasm</keyword>
<keyword id="KW-0520">NAD</keyword>
<keyword id="KW-0560">Oxidoreductase</keyword>
<keyword id="KW-0664">Pyridoxine biosynthesis</keyword>
<keyword id="KW-1185">Reference proteome</keyword>
<gene>
    <name evidence="2" type="primary">epd</name>
    <name type="ordered locus">SSON_3079</name>
</gene>
<accession>Q3YXU5</accession>
<reference key="1">
    <citation type="journal article" date="2005" name="Nucleic Acids Res.">
        <title>Genome dynamics and diversity of Shigella species, the etiologic agents of bacillary dysentery.</title>
        <authorList>
            <person name="Yang F."/>
            <person name="Yang J."/>
            <person name="Zhang X."/>
            <person name="Chen L."/>
            <person name="Jiang Y."/>
            <person name="Yan Y."/>
            <person name="Tang X."/>
            <person name="Wang J."/>
            <person name="Xiong Z."/>
            <person name="Dong J."/>
            <person name="Xue Y."/>
            <person name="Zhu Y."/>
            <person name="Xu X."/>
            <person name="Sun L."/>
            <person name="Chen S."/>
            <person name="Nie H."/>
            <person name="Peng J."/>
            <person name="Xu J."/>
            <person name="Wang Y."/>
            <person name="Yuan Z."/>
            <person name="Wen Y."/>
            <person name="Yao Z."/>
            <person name="Shen Y."/>
            <person name="Qiang B."/>
            <person name="Hou Y."/>
            <person name="Yu J."/>
            <person name="Jin Q."/>
        </authorList>
    </citation>
    <scope>NUCLEOTIDE SEQUENCE [LARGE SCALE GENOMIC DNA]</scope>
    <source>
        <strain>Ss046</strain>
    </source>
</reference>
<feature type="initiator methionine" description="Removed" evidence="1">
    <location>
        <position position="1"/>
    </location>
</feature>
<feature type="chain" id="PRO_0000293172" description="D-erythrose-4-phosphate dehydrogenase">
    <location>
        <begin position="2"/>
        <end position="339"/>
    </location>
</feature>
<feature type="active site" description="Nucleophile" evidence="2">
    <location>
        <position position="155"/>
    </location>
</feature>
<feature type="binding site" evidence="2">
    <location>
        <begin position="12"/>
        <end position="13"/>
    </location>
    <ligand>
        <name>NAD(+)</name>
        <dbReference type="ChEBI" id="CHEBI:57540"/>
    </ligand>
</feature>
<feature type="binding site" evidence="2">
    <location>
        <position position="81"/>
    </location>
    <ligand>
        <name>NAD(+)</name>
        <dbReference type="ChEBI" id="CHEBI:57540"/>
    </ligand>
</feature>
<feature type="binding site" evidence="2">
    <location>
        <begin position="154"/>
        <end position="156"/>
    </location>
    <ligand>
        <name>substrate</name>
    </ligand>
</feature>
<feature type="binding site" evidence="2">
    <location>
        <position position="200"/>
    </location>
    <ligand>
        <name>substrate</name>
    </ligand>
</feature>
<feature type="binding site" evidence="2">
    <location>
        <begin position="213"/>
        <end position="214"/>
    </location>
    <ligand>
        <name>substrate</name>
    </ligand>
</feature>
<feature type="binding site" evidence="2">
    <location>
        <position position="236"/>
    </location>
    <ligand>
        <name>substrate</name>
    </ligand>
</feature>
<feature type="binding site" evidence="2">
    <location>
        <position position="318"/>
    </location>
    <ligand>
        <name>NAD(+)</name>
        <dbReference type="ChEBI" id="CHEBI:57540"/>
    </ligand>
</feature>
<feature type="site" description="Activates thiol group during catalysis" evidence="2">
    <location>
        <position position="182"/>
    </location>
</feature>
<dbReference type="EC" id="1.2.1.72" evidence="2"/>
<dbReference type="EMBL" id="CP000038">
    <property type="protein sequence ID" value="AAZ89667.1"/>
    <property type="molecule type" value="Genomic_DNA"/>
</dbReference>
<dbReference type="RefSeq" id="WP_000218480.1">
    <property type="nucleotide sequence ID" value="NC_007384.1"/>
</dbReference>
<dbReference type="SMR" id="Q3YXU5"/>
<dbReference type="GeneID" id="93779071"/>
<dbReference type="KEGG" id="ssn:SSON_3079"/>
<dbReference type="HOGENOM" id="CLU_030140_0_2_6"/>
<dbReference type="UniPathway" id="UPA00244">
    <property type="reaction ID" value="UER00309"/>
</dbReference>
<dbReference type="Proteomes" id="UP000002529">
    <property type="component" value="Chromosome"/>
</dbReference>
<dbReference type="GO" id="GO:0005737">
    <property type="term" value="C:cytoplasm"/>
    <property type="evidence" value="ECO:0007669"/>
    <property type="project" value="UniProtKB-SubCell"/>
</dbReference>
<dbReference type="GO" id="GO:0048001">
    <property type="term" value="F:erythrose-4-phosphate dehydrogenase activity"/>
    <property type="evidence" value="ECO:0007669"/>
    <property type="project" value="UniProtKB-UniRule"/>
</dbReference>
<dbReference type="GO" id="GO:0051287">
    <property type="term" value="F:NAD binding"/>
    <property type="evidence" value="ECO:0007669"/>
    <property type="project" value="InterPro"/>
</dbReference>
<dbReference type="GO" id="GO:0042823">
    <property type="term" value="P:pyridoxal phosphate biosynthetic process"/>
    <property type="evidence" value="ECO:0007669"/>
    <property type="project" value="UniProtKB-UniRule"/>
</dbReference>
<dbReference type="GO" id="GO:0008615">
    <property type="term" value="P:pyridoxine biosynthetic process"/>
    <property type="evidence" value="ECO:0007669"/>
    <property type="project" value="UniProtKB-UniRule"/>
</dbReference>
<dbReference type="CDD" id="cd23937">
    <property type="entry name" value="GAPDH_C_E4PDH"/>
    <property type="match status" value="1"/>
</dbReference>
<dbReference type="CDD" id="cd17892">
    <property type="entry name" value="GAPDH_N_E4PDH"/>
    <property type="match status" value="1"/>
</dbReference>
<dbReference type="FunFam" id="3.30.360.10:FF:000007">
    <property type="entry name" value="D-erythrose-4-phosphate dehydrogenase"/>
    <property type="match status" value="1"/>
</dbReference>
<dbReference type="FunFam" id="3.40.50.720:FF:000001">
    <property type="entry name" value="Glyceraldehyde-3-phosphate dehydrogenase"/>
    <property type="match status" value="1"/>
</dbReference>
<dbReference type="Gene3D" id="3.30.360.10">
    <property type="entry name" value="Dihydrodipicolinate Reductase, domain 2"/>
    <property type="match status" value="1"/>
</dbReference>
<dbReference type="Gene3D" id="3.40.50.720">
    <property type="entry name" value="NAD(P)-binding Rossmann-like Domain"/>
    <property type="match status" value="1"/>
</dbReference>
<dbReference type="HAMAP" id="MF_01640">
    <property type="entry name" value="E4P_dehydrog"/>
    <property type="match status" value="1"/>
</dbReference>
<dbReference type="InterPro" id="IPR006422">
    <property type="entry name" value="E4P_DH_bac"/>
</dbReference>
<dbReference type="InterPro" id="IPR020831">
    <property type="entry name" value="GlycerAld/Erythrose_P_DH"/>
</dbReference>
<dbReference type="InterPro" id="IPR020830">
    <property type="entry name" value="GlycerAld_3-P_DH_AS"/>
</dbReference>
<dbReference type="InterPro" id="IPR020829">
    <property type="entry name" value="GlycerAld_3-P_DH_cat"/>
</dbReference>
<dbReference type="InterPro" id="IPR020828">
    <property type="entry name" value="GlycerAld_3-P_DH_NAD(P)-bd"/>
</dbReference>
<dbReference type="InterPro" id="IPR036291">
    <property type="entry name" value="NAD(P)-bd_dom_sf"/>
</dbReference>
<dbReference type="NCBIfam" id="TIGR01532">
    <property type="entry name" value="E4PD_g-proteo"/>
    <property type="match status" value="1"/>
</dbReference>
<dbReference type="NCBIfam" id="NF010058">
    <property type="entry name" value="PRK13535.1"/>
    <property type="match status" value="1"/>
</dbReference>
<dbReference type="PANTHER" id="PTHR43148">
    <property type="entry name" value="GLYCERALDEHYDE-3-PHOSPHATE DEHYDROGENASE 2"/>
    <property type="match status" value="1"/>
</dbReference>
<dbReference type="Pfam" id="PF02800">
    <property type="entry name" value="Gp_dh_C"/>
    <property type="match status" value="1"/>
</dbReference>
<dbReference type="Pfam" id="PF00044">
    <property type="entry name" value="Gp_dh_N"/>
    <property type="match status" value="1"/>
</dbReference>
<dbReference type="PIRSF" id="PIRSF000149">
    <property type="entry name" value="GAP_DH"/>
    <property type="match status" value="1"/>
</dbReference>
<dbReference type="PRINTS" id="PR00078">
    <property type="entry name" value="G3PDHDRGNASE"/>
</dbReference>
<dbReference type="SMART" id="SM00846">
    <property type="entry name" value="Gp_dh_N"/>
    <property type="match status" value="1"/>
</dbReference>
<dbReference type="SUPFAM" id="SSF55347">
    <property type="entry name" value="Glyceraldehyde-3-phosphate dehydrogenase-like, C-terminal domain"/>
    <property type="match status" value="1"/>
</dbReference>
<dbReference type="SUPFAM" id="SSF51735">
    <property type="entry name" value="NAD(P)-binding Rossmann-fold domains"/>
    <property type="match status" value="1"/>
</dbReference>
<dbReference type="PROSITE" id="PS00071">
    <property type="entry name" value="GAPDH"/>
    <property type="match status" value="1"/>
</dbReference>
<proteinExistence type="inferred from homology"/>
<evidence type="ECO:0000250" key="1"/>
<evidence type="ECO:0000255" key="2">
    <source>
        <dbReference type="HAMAP-Rule" id="MF_01640"/>
    </source>
</evidence>
<sequence>MTVRVAINGFGRIGRNVVRALYESGRRAEITVVAINELADAAGMAHLLKYDTSHGRFAWEVRQERDQLFVGDDAIRVLHERSLQSLPWRELGVDVVLDCTGVYGSREHGEAHIAAGAKKVLFSHPGSNDLDATVVYGVNQDQLRAEHRIVSNASCTTNCIIPVIKLLDDAYGIESGTVTTIHSAMHDQQVIDAYHPDLRRTRAASQSIIPVDTKLAAGITRFFPQFNDRFEAIAVRVPTINVTAIDLSVTVKKPVKANEVNLLLQKAAQGAFHGIVDYTELPLVSVDFNHDPHSAIVDGTQTRVSGAHLIKTLVWCDNEWGFANRMLDTTLAMATVAFR</sequence>
<name>E4PD_SHISS</name>
<organism>
    <name type="scientific">Shigella sonnei (strain Ss046)</name>
    <dbReference type="NCBI Taxonomy" id="300269"/>
    <lineage>
        <taxon>Bacteria</taxon>
        <taxon>Pseudomonadati</taxon>
        <taxon>Pseudomonadota</taxon>
        <taxon>Gammaproteobacteria</taxon>
        <taxon>Enterobacterales</taxon>
        <taxon>Enterobacteriaceae</taxon>
        <taxon>Shigella</taxon>
    </lineage>
</organism>
<comment type="function">
    <text evidence="2">Catalyzes the NAD-dependent conversion of D-erythrose 4-phosphate to 4-phosphoerythronate.</text>
</comment>
<comment type="catalytic activity">
    <reaction evidence="2">
        <text>D-erythrose 4-phosphate + NAD(+) + H2O = 4-phospho-D-erythronate + NADH + 2 H(+)</text>
        <dbReference type="Rhea" id="RHEA:12056"/>
        <dbReference type="ChEBI" id="CHEBI:15377"/>
        <dbReference type="ChEBI" id="CHEBI:15378"/>
        <dbReference type="ChEBI" id="CHEBI:16897"/>
        <dbReference type="ChEBI" id="CHEBI:57540"/>
        <dbReference type="ChEBI" id="CHEBI:57945"/>
        <dbReference type="ChEBI" id="CHEBI:58766"/>
        <dbReference type="EC" id="1.2.1.72"/>
    </reaction>
</comment>
<comment type="pathway">
    <text evidence="2">Cofactor biosynthesis; pyridoxine 5'-phosphate biosynthesis; pyridoxine 5'-phosphate from D-erythrose 4-phosphate: step 1/5.</text>
</comment>
<comment type="subunit">
    <text evidence="2">Homotetramer.</text>
</comment>
<comment type="subcellular location">
    <subcellularLocation>
        <location evidence="2">Cytoplasm</location>
    </subcellularLocation>
</comment>
<comment type="similarity">
    <text evidence="2">Belongs to the glyceraldehyde-3-phosphate dehydrogenase family. Epd subfamily.</text>
</comment>